<name>SUCC_SULDN</name>
<keyword id="KW-0067">ATP-binding</keyword>
<keyword id="KW-0436">Ligase</keyword>
<keyword id="KW-0460">Magnesium</keyword>
<keyword id="KW-0479">Metal-binding</keyword>
<keyword id="KW-0547">Nucleotide-binding</keyword>
<keyword id="KW-1185">Reference proteome</keyword>
<keyword id="KW-0816">Tricarboxylic acid cycle</keyword>
<reference key="1">
    <citation type="journal article" date="2008" name="Appl. Environ. Microbiol.">
        <title>Genome of the epsilonproteobacterial chemolithoautotroph Sulfurimonas denitrificans.</title>
        <authorList>
            <person name="Sievert S.M."/>
            <person name="Scott K.M."/>
            <person name="Klotz M.G."/>
            <person name="Chain P.S.G."/>
            <person name="Hauser L.J."/>
            <person name="Hemp J."/>
            <person name="Huegler M."/>
            <person name="Land M."/>
            <person name="Lapidus A."/>
            <person name="Larimer F.W."/>
            <person name="Lucas S."/>
            <person name="Malfatti S.A."/>
            <person name="Meyer F."/>
            <person name="Paulsen I.T."/>
            <person name="Ren Q."/>
            <person name="Simon J."/>
            <person name="Bailey K."/>
            <person name="Diaz E."/>
            <person name="Fitzpatrick K.A."/>
            <person name="Glover B."/>
            <person name="Gwatney N."/>
            <person name="Korajkic A."/>
            <person name="Long A."/>
            <person name="Mobberley J.M."/>
            <person name="Pantry S.N."/>
            <person name="Pazder G."/>
            <person name="Peterson S."/>
            <person name="Quintanilla J.D."/>
            <person name="Sprinkle R."/>
            <person name="Stephens J."/>
            <person name="Thomas P."/>
            <person name="Vaughn R."/>
            <person name="Weber M.J."/>
            <person name="Wooten L.L."/>
        </authorList>
    </citation>
    <scope>NUCLEOTIDE SEQUENCE [LARGE SCALE GENOMIC DNA]</scope>
    <source>
        <strain>ATCC 33889 / DSM 1251</strain>
    </source>
</reference>
<feature type="chain" id="PRO_1000082250" description="Succinate--CoA ligase [ADP-forming] subunit beta">
    <location>
        <begin position="1"/>
        <end position="391"/>
    </location>
</feature>
<feature type="domain" description="ATP-grasp" evidence="1">
    <location>
        <begin position="9"/>
        <end position="245"/>
    </location>
</feature>
<feature type="binding site" evidence="1">
    <location>
        <position position="46"/>
    </location>
    <ligand>
        <name>ATP</name>
        <dbReference type="ChEBI" id="CHEBI:30616"/>
    </ligand>
</feature>
<feature type="binding site" evidence="1">
    <location>
        <begin position="53"/>
        <end position="55"/>
    </location>
    <ligand>
        <name>ATP</name>
        <dbReference type="ChEBI" id="CHEBI:30616"/>
    </ligand>
</feature>
<feature type="binding site" evidence="1">
    <location>
        <position position="99"/>
    </location>
    <ligand>
        <name>ATP</name>
        <dbReference type="ChEBI" id="CHEBI:30616"/>
    </ligand>
</feature>
<feature type="binding site" evidence="1">
    <location>
        <position position="102"/>
    </location>
    <ligand>
        <name>ATP</name>
        <dbReference type="ChEBI" id="CHEBI:30616"/>
    </ligand>
</feature>
<feature type="binding site" evidence="1">
    <location>
        <position position="107"/>
    </location>
    <ligand>
        <name>ATP</name>
        <dbReference type="ChEBI" id="CHEBI:30616"/>
    </ligand>
</feature>
<feature type="binding site" evidence="1">
    <location>
        <position position="200"/>
    </location>
    <ligand>
        <name>Mg(2+)</name>
        <dbReference type="ChEBI" id="CHEBI:18420"/>
    </ligand>
</feature>
<feature type="binding site" evidence="1">
    <location>
        <position position="214"/>
    </location>
    <ligand>
        <name>Mg(2+)</name>
        <dbReference type="ChEBI" id="CHEBI:18420"/>
    </ligand>
</feature>
<feature type="binding site" evidence="1">
    <location>
        <position position="265"/>
    </location>
    <ligand>
        <name>substrate</name>
        <note>ligand shared with subunit alpha</note>
    </ligand>
</feature>
<feature type="binding site" evidence="1">
    <location>
        <begin position="322"/>
        <end position="324"/>
    </location>
    <ligand>
        <name>substrate</name>
        <note>ligand shared with subunit alpha</note>
    </ligand>
</feature>
<dbReference type="EC" id="6.2.1.5" evidence="1"/>
<dbReference type="EMBL" id="CP000153">
    <property type="protein sequence ID" value="ABB44328.1"/>
    <property type="molecule type" value="Genomic_DNA"/>
</dbReference>
<dbReference type="RefSeq" id="WP_011372680.1">
    <property type="nucleotide sequence ID" value="NC_007575.1"/>
</dbReference>
<dbReference type="SMR" id="Q30RQ3"/>
<dbReference type="STRING" id="326298.Suden_1050"/>
<dbReference type="KEGG" id="tdn:Suden_1050"/>
<dbReference type="eggNOG" id="COG0045">
    <property type="taxonomic scope" value="Bacteria"/>
</dbReference>
<dbReference type="HOGENOM" id="CLU_037430_0_2_7"/>
<dbReference type="OrthoDB" id="9802602at2"/>
<dbReference type="UniPathway" id="UPA00223">
    <property type="reaction ID" value="UER00999"/>
</dbReference>
<dbReference type="Proteomes" id="UP000002714">
    <property type="component" value="Chromosome"/>
</dbReference>
<dbReference type="GO" id="GO:0005829">
    <property type="term" value="C:cytosol"/>
    <property type="evidence" value="ECO:0007669"/>
    <property type="project" value="TreeGrafter"/>
</dbReference>
<dbReference type="GO" id="GO:0042709">
    <property type="term" value="C:succinate-CoA ligase complex"/>
    <property type="evidence" value="ECO:0007669"/>
    <property type="project" value="TreeGrafter"/>
</dbReference>
<dbReference type="GO" id="GO:0005524">
    <property type="term" value="F:ATP binding"/>
    <property type="evidence" value="ECO:0007669"/>
    <property type="project" value="UniProtKB-UniRule"/>
</dbReference>
<dbReference type="GO" id="GO:0000287">
    <property type="term" value="F:magnesium ion binding"/>
    <property type="evidence" value="ECO:0007669"/>
    <property type="project" value="UniProtKB-UniRule"/>
</dbReference>
<dbReference type="GO" id="GO:0004775">
    <property type="term" value="F:succinate-CoA ligase (ADP-forming) activity"/>
    <property type="evidence" value="ECO:0007669"/>
    <property type="project" value="UniProtKB-UniRule"/>
</dbReference>
<dbReference type="GO" id="GO:0004776">
    <property type="term" value="F:succinate-CoA ligase (GDP-forming) activity"/>
    <property type="evidence" value="ECO:0007669"/>
    <property type="project" value="RHEA"/>
</dbReference>
<dbReference type="GO" id="GO:0006104">
    <property type="term" value="P:succinyl-CoA metabolic process"/>
    <property type="evidence" value="ECO:0007669"/>
    <property type="project" value="TreeGrafter"/>
</dbReference>
<dbReference type="GO" id="GO:0006099">
    <property type="term" value="P:tricarboxylic acid cycle"/>
    <property type="evidence" value="ECO:0007669"/>
    <property type="project" value="UniProtKB-UniRule"/>
</dbReference>
<dbReference type="FunFam" id="3.30.1490.20:FF:000002">
    <property type="entry name" value="Succinate--CoA ligase [ADP-forming] subunit beta"/>
    <property type="match status" value="1"/>
</dbReference>
<dbReference type="FunFam" id="3.30.470.20:FF:000002">
    <property type="entry name" value="Succinate--CoA ligase [ADP-forming] subunit beta"/>
    <property type="match status" value="1"/>
</dbReference>
<dbReference type="FunFam" id="3.40.50.261:FF:000001">
    <property type="entry name" value="Succinate--CoA ligase [ADP-forming] subunit beta"/>
    <property type="match status" value="1"/>
</dbReference>
<dbReference type="Gene3D" id="3.30.1490.20">
    <property type="entry name" value="ATP-grasp fold, A domain"/>
    <property type="match status" value="1"/>
</dbReference>
<dbReference type="Gene3D" id="3.30.470.20">
    <property type="entry name" value="ATP-grasp fold, B domain"/>
    <property type="match status" value="1"/>
</dbReference>
<dbReference type="Gene3D" id="3.40.50.261">
    <property type="entry name" value="Succinyl-CoA synthetase domains"/>
    <property type="match status" value="1"/>
</dbReference>
<dbReference type="HAMAP" id="MF_00558">
    <property type="entry name" value="Succ_CoA_beta"/>
    <property type="match status" value="1"/>
</dbReference>
<dbReference type="InterPro" id="IPR011761">
    <property type="entry name" value="ATP-grasp"/>
</dbReference>
<dbReference type="InterPro" id="IPR013650">
    <property type="entry name" value="ATP-grasp_succ-CoA_synth-type"/>
</dbReference>
<dbReference type="InterPro" id="IPR013815">
    <property type="entry name" value="ATP_grasp_subdomain_1"/>
</dbReference>
<dbReference type="InterPro" id="IPR017866">
    <property type="entry name" value="Succ-CoA_synthase_bsu_CS"/>
</dbReference>
<dbReference type="InterPro" id="IPR005811">
    <property type="entry name" value="SUCC_ACL_C"/>
</dbReference>
<dbReference type="InterPro" id="IPR005809">
    <property type="entry name" value="Succ_CoA_ligase-like_bsu"/>
</dbReference>
<dbReference type="InterPro" id="IPR016102">
    <property type="entry name" value="Succinyl-CoA_synth-like"/>
</dbReference>
<dbReference type="NCBIfam" id="NF001913">
    <property type="entry name" value="PRK00696.1"/>
    <property type="match status" value="1"/>
</dbReference>
<dbReference type="NCBIfam" id="TIGR01016">
    <property type="entry name" value="sucCoAbeta"/>
    <property type="match status" value="1"/>
</dbReference>
<dbReference type="PANTHER" id="PTHR11815:SF10">
    <property type="entry name" value="SUCCINATE--COA LIGASE [GDP-FORMING] SUBUNIT BETA, MITOCHONDRIAL"/>
    <property type="match status" value="1"/>
</dbReference>
<dbReference type="PANTHER" id="PTHR11815">
    <property type="entry name" value="SUCCINYL-COA SYNTHETASE BETA CHAIN"/>
    <property type="match status" value="1"/>
</dbReference>
<dbReference type="Pfam" id="PF08442">
    <property type="entry name" value="ATP-grasp_2"/>
    <property type="match status" value="1"/>
</dbReference>
<dbReference type="Pfam" id="PF00549">
    <property type="entry name" value="Ligase_CoA"/>
    <property type="match status" value="1"/>
</dbReference>
<dbReference type="PIRSF" id="PIRSF001554">
    <property type="entry name" value="SucCS_beta"/>
    <property type="match status" value="1"/>
</dbReference>
<dbReference type="SUPFAM" id="SSF56059">
    <property type="entry name" value="Glutathione synthetase ATP-binding domain-like"/>
    <property type="match status" value="1"/>
</dbReference>
<dbReference type="SUPFAM" id="SSF52210">
    <property type="entry name" value="Succinyl-CoA synthetase domains"/>
    <property type="match status" value="1"/>
</dbReference>
<dbReference type="PROSITE" id="PS50975">
    <property type="entry name" value="ATP_GRASP"/>
    <property type="match status" value="1"/>
</dbReference>
<dbReference type="PROSITE" id="PS01217">
    <property type="entry name" value="SUCCINYL_COA_LIG_3"/>
    <property type="match status" value="1"/>
</dbReference>
<sequence length="391" mass="41611">MNIHEYQAKQIFAKYGVPTPKGLMAESVKQAVANAETLGGSIWVVKAQIHAGGRGLGGGVKLARSLEEVEQLSKEILGMTLVTHQTGPEGKLVQKLYIEEGADIKEELYLGVVLDRAREMPVIMASTEGGMAIEDVAHNTPEKIIKIAVDPAIGFQGFHGRELVFGLGITDPNEQKKLISFASKLYKLYMENDAEMIEINPLVKTGSGEFLALDGKMGFDDSALGRHPDIEDMRDISEEDADEREAGKYGLSYVSLDGEIGCMVNGAGLAMGTMDTINYMGGTPANFLDVGGKANAETVAKGFEIILKNPKVKAIFVNIFGGIVRCDRIANGILEATKLVDVHVPVIVRLDGTNAEEAAAILRDANIANVIAATDLADGAAKAVAAAAQAK</sequence>
<gene>
    <name evidence="1" type="primary">sucC</name>
    <name type="ordered locus">Suden_1050</name>
</gene>
<proteinExistence type="inferred from homology"/>
<comment type="function">
    <text evidence="1">Succinyl-CoA synthetase functions in the citric acid cycle (TCA), coupling the hydrolysis of succinyl-CoA to the synthesis of either ATP or GTP and thus represents the only step of substrate-level phosphorylation in the TCA. The beta subunit provides nucleotide specificity of the enzyme and binds the substrate succinate, while the binding sites for coenzyme A and phosphate are found in the alpha subunit.</text>
</comment>
<comment type="catalytic activity">
    <reaction evidence="1">
        <text>succinate + ATP + CoA = succinyl-CoA + ADP + phosphate</text>
        <dbReference type="Rhea" id="RHEA:17661"/>
        <dbReference type="ChEBI" id="CHEBI:30031"/>
        <dbReference type="ChEBI" id="CHEBI:30616"/>
        <dbReference type="ChEBI" id="CHEBI:43474"/>
        <dbReference type="ChEBI" id="CHEBI:57287"/>
        <dbReference type="ChEBI" id="CHEBI:57292"/>
        <dbReference type="ChEBI" id="CHEBI:456216"/>
        <dbReference type="EC" id="6.2.1.5"/>
    </reaction>
    <physiologicalReaction direction="right-to-left" evidence="1">
        <dbReference type="Rhea" id="RHEA:17663"/>
    </physiologicalReaction>
</comment>
<comment type="catalytic activity">
    <reaction evidence="1">
        <text>GTP + succinate + CoA = succinyl-CoA + GDP + phosphate</text>
        <dbReference type="Rhea" id="RHEA:22120"/>
        <dbReference type="ChEBI" id="CHEBI:30031"/>
        <dbReference type="ChEBI" id="CHEBI:37565"/>
        <dbReference type="ChEBI" id="CHEBI:43474"/>
        <dbReference type="ChEBI" id="CHEBI:57287"/>
        <dbReference type="ChEBI" id="CHEBI:57292"/>
        <dbReference type="ChEBI" id="CHEBI:58189"/>
    </reaction>
    <physiologicalReaction direction="right-to-left" evidence="1">
        <dbReference type="Rhea" id="RHEA:22122"/>
    </physiologicalReaction>
</comment>
<comment type="cofactor">
    <cofactor evidence="1">
        <name>Mg(2+)</name>
        <dbReference type="ChEBI" id="CHEBI:18420"/>
    </cofactor>
    <text evidence="1">Binds 1 Mg(2+) ion per subunit.</text>
</comment>
<comment type="pathway">
    <text evidence="1">Carbohydrate metabolism; tricarboxylic acid cycle; succinate from succinyl-CoA (ligase route): step 1/1.</text>
</comment>
<comment type="subunit">
    <text evidence="1">Heterotetramer of two alpha and two beta subunits.</text>
</comment>
<comment type="similarity">
    <text evidence="1">Belongs to the succinate/malate CoA ligase beta subunit family.</text>
</comment>
<organism>
    <name type="scientific">Sulfurimonas denitrificans (strain ATCC 33889 / DSM 1251)</name>
    <name type="common">Thiomicrospira denitrificans (strain ATCC 33889 / DSM 1251)</name>
    <dbReference type="NCBI Taxonomy" id="326298"/>
    <lineage>
        <taxon>Bacteria</taxon>
        <taxon>Pseudomonadati</taxon>
        <taxon>Campylobacterota</taxon>
        <taxon>Epsilonproteobacteria</taxon>
        <taxon>Campylobacterales</taxon>
        <taxon>Sulfurimonadaceae</taxon>
        <taxon>Sulfurimonas</taxon>
    </lineage>
</organism>
<accession>Q30RQ3</accession>
<evidence type="ECO:0000255" key="1">
    <source>
        <dbReference type="HAMAP-Rule" id="MF_00558"/>
    </source>
</evidence>
<protein>
    <recommendedName>
        <fullName evidence="1">Succinate--CoA ligase [ADP-forming] subunit beta</fullName>
        <ecNumber evidence="1">6.2.1.5</ecNumber>
    </recommendedName>
    <alternativeName>
        <fullName evidence="1">Succinyl-CoA synthetase subunit beta</fullName>
        <shortName evidence="1">SCS-beta</shortName>
    </alternativeName>
</protein>